<reference key="1">
    <citation type="journal article" date="2007" name="DNA Res.">
        <title>Complete genomic structure of the bloom-forming toxic cyanobacterium Microcystis aeruginosa NIES-843.</title>
        <authorList>
            <person name="Kaneko T."/>
            <person name="Nakajima N."/>
            <person name="Okamoto S."/>
            <person name="Suzuki I."/>
            <person name="Tanabe Y."/>
            <person name="Tamaoki M."/>
            <person name="Nakamura Y."/>
            <person name="Kasai F."/>
            <person name="Watanabe A."/>
            <person name="Kawashima K."/>
            <person name="Kishida Y."/>
            <person name="Ono A."/>
            <person name="Shimizu Y."/>
            <person name="Takahashi C."/>
            <person name="Minami C."/>
            <person name="Fujishiro T."/>
            <person name="Kohara M."/>
            <person name="Katoh M."/>
            <person name="Nakazaki N."/>
            <person name="Nakayama S."/>
            <person name="Yamada M."/>
            <person name="Tabata S."/>
            <person name="Watanabe M.M."/>
        </authorList>
    </citation>
    <scope>NUCLEOTIDE SEQUENCE [LARGE SCALE GENOMIC DNA]</scope>
    <source>
        <strain>NIES-843 / IAM M-247</strain>
    </source>
</reference>
<organism>
    <name type="scientific">Microcystis aeruginosa (strain NIES-843 / IAM M-2473)</name>
    <dbReference type="NCBI Taxonomy" id="449447"/>
    <lineage>
        <taxon>Bacteria</taxon>
        <taxon>Bacillati</taxon>
        <taxon>Cyanobacteriota</taxon>
        <taxon>Cyanophyceae</taxon>
        <taxon>Oscillatoriophycideae</taxon>
        <taxon>Chroococcales</taxon>
        <taxon>Microcystaceae</taxon>
        <taxon>Microcystis</taxon>
    </lineage>
</organism>
<proteinExistence type="inferred from homology"/>
<sequence length="64" mass="7233">MAQRTRLGEILRPLNSEYGKVSPGWGTTLLMGVFMALFLVFLLIILQIYNSSLILEGFNVDWGQ</sequence>
<keyword id="KW-0472">Membrane</keyword>
<keyword id="KW-0602">Photosynthesis</keyword>
<keyword id="KW-0604">Photosystem II</keyword>
<keyword id="KW-0793">Thylakoid</keyword>
<keyword id="KW-0812">Transmembrane</keyword>
<keyword id="KW-1133">Transmembrane helix</keyword>
<name>PSBH_MICAN</name>
<feature type="chain" id="PRO_1000083500" description="Photosystem II reaction center protein H">
    <location>
        <begin position="1"/>
        <end position="64"/>
    </location>
</feature>
<feature type="transmembrane region" description="Helical" evidence="1">
    <location>
        <begin position="29"/>
        <end position="49"/>
    </location>
</feature>
<evidence type="ECO:0000255" key="1">
    <source>
        <dbReference type="HAMAP-Rule" id="MF_00752"/>
    </source>
</evidence>
<protein>
    <recommendedName>
        <fullName evidence="1">Photosystem II reaction center protein H</fullName>
        <shortName evidence="1">PSII-H</shortName>
    </recommendedName>
</protein>
<gene>
    <name evidence="1" type="primary">psbH</name>
    <name type="ordered locus">MAE_54000</name>
</gene>
<dbReference type="EMBL" id="AP009552">
    <property type="protein sequence ID" value="BAG05222.1"/>
    <property type="molecule type" value="Genomic_DNA"/>
</dbReference>
<dbReference type="RefSeq" id="WP_002736544.1">
    <property type="nucleotide sequence ID" value="NC_010296.1"/>
</dbReference>
<dbReference type="SMR" id="B0JGF6"/>
<dbReference type="STRING" id="449447.MAE_54000"/>
<dbReference type="PaxDb" id="449447-MAE_54000"/>
<dbReference type="EnsemblBacteria" id="BAG05222">
    <property type="protein sequence ID" value="BAG05222"/>
    <property type="gene ID" value="MAE_54000"/>
</dbReference>
<dbReference type="GeneID" id="66705792"/>
<dbReference type="KEGG" id="mar:MAE_54000"/>
<dbReference type="eggNOG" id="ENOG50332MV">
    <property type="taxonomic scope" value="Bacteria"/>
</dbReference>
<dbReference type="HOGENOM" id="CLU_190203_0_0_3"/>
<dbReference type="BioCyc" id="MAER449447:MAE_RS23465-MONOMER"/>
<dbReference type="Proteomes" id="UP000001510">
    <property type="component" value="Chromosome"/>
</dbReference>
<dbReference type="GO" id="GO:0009523">
    <property type="term" value="C:photosystem II"/>
    <property type="evidence" value="ECO:0007669"/>
    <property type="project" value="UniProtKB-KW"/>
</dbReference>
<dbReference type="GO" id="GO:0031676">
    <property type="term" value="C:plasma membrane-derived thylakoid membrane"/>
    <property type="evidence" value="ECO:0007669"/>
    <property type="project" value="UniProtKB-SubCell"/>
</dbReference>
<dbReference type="GO" id="GO:0042301">
    <property type="term" value="F:phosphate ion binding"/>
    <property type="evidence" value="ECO:0007669"/>
    <property type="project" value="InterPro"/>
</dbReference>
<dbReference type="GO" id="GO:0015979">
    <property type="term" value="P:photosynthesis"/>
    <property type="evidence" value="ECO:0007669"/>
    <property type="project" value="UniProtKB-UniRule"/>
</dbReference>
<dbReference type="GO" id="GO:0050821">
    <property type="term" value="P:protein stabilization"/>
    <property type="evidence" value="ECO:0007669"/>
    <property type="project" value="InterPro"/>
</dbReference>
<dbReference type="Gene3D" id="1.20.5.880">
    <property type="entry name" value="Photosystem II reaction center protein H"/>
    <property type="match status" value="1"/>
</dbReference>
<dbReference type="HAMAP" id="MF_00752">
    <property type="entry name" value="PSII_PsbH"/>
    <property type="match status" value="1"/>
</dbReference>
<dbReference type="InterPro" id="IPR001056">
    <property type="entry name" value="PSII_PsbH"/>
</dbReference>
<dbReference type="InterPro" id="IPR036863">
    <property type="entry name" value="PSII_PsbH_sf"/>
</dbReference>
<dbReference type="NCBIfam" id="NF002728">
    <property type="entry name" value="PRK02624.1"/>
    <property type="match status" value="1"/>
</dbReference>
<dbReference type="PANTHER" id="PTHR34469">
    <property type="entry name" value="PHOTOSYSTEM II REACTION CENTER PROTEIN H"/>
    <property type="match status" value="1"/>
</dbReference>
<dbReference type="PANTHER" id="PTHR34469:SF4">
    <property type="entry name" value="PHOTOSYSTEM II REACTION CENTER PROTEIN H"/>
    <property type="match status" value="1"/>
</dbReference>
<dbReference type="Pfam" id="PF00737">
    <property type="entry name" value="PsbH"/>
    <property type="match status" value="1"/>
</dbReference>
<dbReference type="SUPFAM" id="SSF161025">
    <property type="entry name" value="Photosystem II 10 kDa phosphoprotein PsbH"/>
    <property type="match status" value="1"/>
</dbReference>
<comment type="function">
    <text evidence="1">One of the components of the core complex of photosystem II (PSII), required for its stability and/or assembly. PSII is a light-driven water:plastoquinone oxidoreductase that uses light energy to abstract electrons from H(2)O, generating O(2) and a proton gradient subsequently used for ATP formation. It consists of a core antenna complex that captures photons, and an electron transfer chain that converts photonic excitation into a charge separation.</text>
</comment>
<comment type="subunit">
    <text evidence="1">PSII is composed of 1 copy each of membrane proteins PsbA, PsbB, PsbC, PsbD, PsbE, PsbF, PsbH, PsbI, PsbJ, PsbK, PsbL, PsbM, PsbT, PsbX, PsbY, PsbZ, Psb30/Ycf12, peripheral proteins PsbO, CyanoQ (PsbQ), PsbU, PsbV and a large number of cofactors. It forms dimeric complexes.</text>
</comment>
<comment type="subcellular location">
    <subcellularLocation>
        <location evidence="1">Cellular thylakoid membrane</location>
        <topology evidence="1">Single-pass membrane protein</topology>
    </subcellularLocation>
</comment>
<comment type="similarity">
    <text evidence="1">Belongs to the PsbH family.</text>
</comment>
<accession>B0JGF6</accession>